<dbReference type="EC" id="2.7.7.2"/>
<dbReference type="EMBL" id="CU329672">
    <property type="protein sequence ID" value="CAA21108.1"/>
    <property type="molecule type" value="Genomic_DNA"/>
</dbReference>
<dbReference type="PIR" id="T40878">
    <property type="entry name" value="T40878"/>
</dbReference>
<dbReference type="SMR" id="O74841"/>
<dbReference type="FunCoup" id="O74841">
    <property type="interactions" value="153"/>
</dbReference>
<dbReference type="STRING" id="284812.O74841"/>
<dbReference type="iPTMnet" id="O74841"/>
<dbReference type="PaxDb" id="4896-SPCC1235.04c.1"/>
<dbReference type="EnsemblFungi" id="SPCC1235.04c.1">
    <property type="protein sequence ID" value="SPCC1235.04c.1:pep"/>
    <property type="gene ID" value="SPCC1235.04c"/>
</dbReference>
<dbReference type="KEGG" id="spo:2539270"/>
<dbReference type="PomBase" id="SPCC1235.04c"/>
<dbReference type="VEuPathDB" id="FungiDB:SPCC1235.04c"/>
<dbReference type="eggNOG" id="KOG2644">
    <property type="taxonomic scope" value="Eukaryota"/>
</dbReference>
<dbReference type="HOGENOM" id="CLU_056971_0_1_1"/>
<dbReference type="InParanoid" id="O74841"/>
<dbReference type="OMA" id="EEFVQWS"/>
<dbReference type="PhylomeDB" id="O74841"/>
<dbReference type="Reactome" id="R-SPO-196843">
    <property type="pathway name" value="Vitamin B2 (riboflavin) metabolism"/>
</dbReference>
<dbReference type="UniPathway" id="UPA00277">
    <property type="reaction ID" value="UER00407"/>
</dbReference>
<dbReference type="PRO" id="PR:O74841"/>
<dbReference type="Proteomes" id="UP000002485">
    <property type="component" value="Chromosome III"/>
</dbReference>
<dbReference type="GO" id="GO:0005829">
    <property type="term" value="C:cytosol"/>
    <property type="evidence" value="ECO:0007005"/>
    <property type="project" value="PomBase"/>
</dbReference>
<dbReference type="GO" id="GO:0005634">
    <property type="term" value="C:nucleus"/>
    <property type="evidence" value="ECO:0007005"/>
    <property type="project" value="PomBase"/>
</dbReference>
<dbReference type="GO" id="GO:0005524">
    <property type="term" value="F:ATP binding"/>
    <property type="evidence" value="ECO:0007669"/>
    <property type="project" value="UniProtKB-KW"/>
</dbReference>
<dbReference type="GO" id="GO:0003919">
    <property type="term" value="F:FMN adenylyltransferase activity"/>
    <property type="evidence" value="ECO:0000318"/>
    <property type="project" value="GO_Central"/>
</dbReference>
<dbReference type="GO" id="GO:0006747">
    <property type="term" value="P:FAD biosynthetic process"/>
    <property type="evidence" value="ECO:0000318"/>
    <property type="project" value="GO_Central"/>
</dbReference>
<dbReference type="GO" id="GO:0046444">
    <property type="term" value="P:FMN metabolic process"/>
    <property type="evidence" value="ECO:0000250"/>
    <property type="project" value="PomBase"/>
</dbReference>
<dbReference type="CDD" id="cd23948">
    <property type="entry name" value="FAD_synthase"/>
    <property type="match status" value="1"/>
</dbReference>
<dbReference type="FunFam" id="3.40.50.620:FF:000187">
    <property type="entry name" value="Probable FAD synthetase"/>
    <property type="match status" value="1"/>
</dbReference>
<dbReference type="Gene3D" id="3.40.50.620">
    <property type="entry name" value="HUPs"/>
    <property type="match status" value="1"/>
</dbReference>
<dbReference type="InterPro" id="IPR002500">
    <property type="entry name" value="PAPS_reduct_dom"/>
</dbReference>
<dbReference type="InterPro" id="IPR014729">
    <property type="entry name" value="Rossmann-like_a/b/a_fold"/>
</dbReference>
<dbReference type="PANTHER" id="PTHR23293:SF9">
    <property type="entry name" value="FAD SYNTHASE"/>
    <property type="match status" value="1"/>
</dbReference>
<dbReference type="PANTHER" id="PTHR23293">
    <property type="entry name" value="FAD SYNTHETASE-RELATED FMN ADENYLYLTRANSFERASE"/>
    <property type="match status" value="1"/>
</dbReference>
<dbReference type="Pfam" id="PF01507">
    <property type="entry name" value="PAPS_reduct"/>
    <property type="match status" value="1"/>
</dbReference>
<dbReference type="SUPFAM" id="SSF52402">
    <property type="entry name" value="Adenine nucleotide alpha hydrolases-like"/>
    <property type="match status" value="1"/>
</dbReference>
<name>FAD1_SCHPO</name>
<proteinExistence type="inferred from homology"/>
<keyword id="KW-0067">ATP-binding</keyword>
<keyword id="KW-0274">FAD</keyword>
<keyword id="KW-0285">Flavoprotein</keyword>
<keyword id="KW-0288">FMN</keyword>
<keyword id="KW-0547">Nucleotide-binding</keyword>
<keyword id="KW-0548">Nucleotidyltransferase</keyword>
<keyword id="KW-1185">Reference proteome</keyword>
<keyword id="KW-0808">Transferase</keyword>
<protein>
    <recommendedName>
        <fullName>Probable FAD synthase</fullName>
        <ecNumber>2.7.7.2</ecNumber>
    </recommendedName>
    <alternativeName>
        <fullName>FAD pyrophosphorylase</fullName>
    </alternativeName>
    <alternativeName>
        <fullName>FMN adenylyltransferase</fullName>
    </alternativeName>
    <alternativeName>
        <fullName>Flavin adenine dinucleotide synthase</fullName>
    </alternativeName>
</protein>
<gene>
    <name type="ORF">SPCC1235.04c</name>
</gene>
<evidence type="ECO:0000250" key="1"/>
<evidence type="ECO:0000305" key="2"/>
<reference key="1">
    <citation type="journal article" date="2002" name="Nature">
        <title>The genome sequence of Schizosaccharomyces pombe.</title>
        <authorList>
            <person name="Wood V."/>
            <person name="Gwilliam R."/>
            <person name="Rajandream M.A."/>
            <person name="Lyne M.H."/>
            <person name="Lyne R."/>
            <person name="Stewart A."/>
            <person name="Sgouros J.G."/>
            <person name="Peat N."/>
            <person name="Hayles J."/>
            <person name="Baker S.G."/>
            <person name="Basham D."/>
            <person name="Bowman S."/>
            <person name="Brooks K."/>
            <person name="Brown D."/>
            <person name="Brown S."/>
            <person name="Chillingworth T."/>
            <person name="Churcher C.M."/>
            <person name="Collins M."/>
            <person name="Connor R."/>
            <person name="Cronin A."/>
            <person name="Davis P."/>
            <person name="Feltwell T."/>
            <person name="Fraser A."/>
            <person name="Gentles S."/>
            <person name="Goble A."/>
            <person name="Hamlin N."/>
            <person name="Harris D.E."/>
            <person name="Hidalgo J."/>
            <person name="Hodgson G."/>
            <person name="Holroyd S."/>
            <person name="Hornsby T."/>
            <person name="Howarth S."/>
            <person name="Huckle E.J."/>
            <person name="Hunt S."/>
            <person name="Jagels K."/>
            <person name="James K.D."/>
            <person name="Jones L."/>
            <person name="Jones M."/>
            <person name="Leather S."/>
            <person name="McDonald S."/>
            <person name="McLean J."/>
            <person name="Mooney P."/>
            <person name="Moule S."/>
            <person name="Mungall K.L."/>
            <person name="Murphy L.D."/>
            <person name="Niblett D."/>
            <person name="Odell C."/>
            <person name="Oliver K."/>
            <person name="O'Neil S."/>
            <person name="Pearson D."/>
            <person name="Quail M.A."/>
            <person name="Rabbinowitsch E."/>
            <person name="Rutherford K.M."/>
            <person name="Rutter S."/>
            <person name="Saunders D."/>
            <person name="Seeger K."/>
            <person name="Sharp S."/>
            <person name="Skelton J."/>
            <person name="Simmonds M.N."/>
            <person name="Squares R."/>
            <person name="Squares S."/>
            <person name="Stevens K."/>
            <person name="Taylor K."/>
            <person name="Taylor R.G."/>
            <person name="Tivey A."/>
            <person name="Walsh S.V."/>
            <person name="Warren T."/>
            <person name="Whitehead S."/>
            <person name="Woodward J.R."/>
            <person name="Volckaert G."/>
            <person name="Aert R."/>
            <person name="Robben J."/>
            <person name="Grymonprez B."/>
            <person name="Weltjens I."/>
            <person name="Vanstreels E."/>
            <person name="Rieger M."/>
            <person name="Schaefer M."/>
            <person name="Mueller-Auer S."/>
            <person name="Gabel C."/>
            <person name="Fuchs M."/>
            <person name="Duesterhoeft A."/>
            <person name="Fritzc C."/>
            <person name="Holzer E."/>
            <person name="Moestl D."/>
            <person name="Hilbert H."/>
            <person name="Borzym K."/>
            <person name="Langer I."/>
            <person name="Beck A."/>
            <person name="Lehrach H."/>
            <person name="Reinhardt R."/>
            <person name="Pohl T.M."/>
            <person name="Eger P."/>
            <person name="Zimmermann W."/>
            <person name="Wedler H."/>
            <person name="Wambutt R."/>
            <person name="Purnelle B."/>
            <person name="Goffeau A."/>
            <person name="Cadieu E."/>
            <person name="Dreano S."/>
            <person name="Gloux S."/>
            <person name="Lelaure V."/>
            <person name="Mottier S."/>
            <person name="Galibert F."/>
            <person name="Aves S.J."/>
            <person name="Xiang Z."/>
            <person name="Hunt C."/>
            <person name="Moore K."/>
            <person name="Hurst S.M."/>
            <person name="Lucas M."/>
            <person name="Rochet M."/>
            <person name="Gaillardin C."/>
            <person name="Tallada V.A."/>
            <person name="Garzon A."/>
            <person name="Thode G."/>
            <person name="Daga R.R."/>
            <person name="Cruzado L."/>
            <person name="Jimenez J."/>
            <person name="Sanchez M."/>
            <person name="del Rey F."/>
            <person name="Benito J."/>
            <person name="Dominguez A."/>
            <person name="Revuelta J.L."/>
            <person name="Moreno S."/>
            <person name="Armstrong J."/>
            <person name="Forsburg S.L."/>
            <person name="Cerutti L."/>
            <person name="Lowe T."/>
            <person name="McCombie W.R."/>
            <person name="Paulsen I."/>
            <person name="Potashkin J."/>
            <person name="Shpakovski G.V."/>
            <person name="Ussery D."/>
            <person name="Barrell B.G."/>
            <person name="Nurse P."/>
        </authorList>
    </citation>
    <scope>NUCLEOTIDE SEQUENCE [LARGE SCALE GENOMIC DNA]</scope>
    <source>
        <strain>972 / ATCC 24843</strain>
    </source>
</reference>
<sequence length="265" mass="30608">MDELERVYQSIKNIFTHSAPSEKLVGLQNRLSISLRFIEYAFETYQPERLAMSFNGGKDCLVLFLLCIYYLKEKYKEQAQAKLSNIPFVFVRPRDEFPEMDDFVNECQSKYRLNIIKISLPMKEAFCKFLKEHKHIQAILIGIRRLDPHGLHRIAFEVTDKGWPKFMRIQPILDWSYTEIWDLLLETNTKYCSLYDRGYTSLGGVSDTSPNPALKNPDGTYSPAYLLSDGSLERAGRNNTVPFSRTNSRFLYDSGASSYASSEVS</sequence>
<feature type="chain" id="PRO_0000100690" description="Probable FAD synthase">
    <location>
        <begin position="1"/>
        <end position="265"/>
    </location>
</feature>
<comment type="function">
    <text evidence="1">Adenylates FMN to FAD.</text>
</comment>
<comment type="catalytic activity">
    <reaction>
        <text>FMN + ATP + H(+) = FAD + diphosphate</text>
        <dbReference type="Rhea" id="RHEA:17237"/>
        <dbReference type="ChEBI" id="CHEBI:15378"/>
        <dbReference type="ChEBI" id="CHEBI:30616"/>
        <dbReference type="ChEBI" id="CHEBI:33019"/>
        <dbReference type="ChEBI" id="CHEBI:57692"/>
        <dbReference type="ChEBI" id="CHEBI:58210"/>
        <dbReference type="EC" id="2.7.7.2"/>
    </reaction>
</comment>
<comment type="pathway">
    <text>Cofactor biosynthesis; FAD biosynthesis; FAD from FMN: step 1/1.</text>
</comment>
<comment type="similarity">
    <text evidence="2">Belongs to the PAPS reductase family. FAD1 subfamily.</text>
</comment>
<organism>
    <name type="scientific">Schizosaccharomyces pombe (strain 972 / ATCC 24843)</name>
    <name type="common">Fission yeast</name>
    <dbReference type="NCBI Taxonomy" id="284812"/>
    <lineage>
        <taxon>Eukaryota</taxon>
        <taxon>Fungi</taxon>
        <taxon>Dikarya</taxon>
        <taxon>Ascomycota</taxon>
        <taxon>Taphrinomycotina</taxon>
        <taxon>Schizosaccharomycetes</taxon>
        <taxon>Schizosaccharomycetales</taxon>
        <taxon>Schizosaccharomycetaceae</taxon>
        <taxon>Schizosaccharomyces</taxon>
    </lineage>
</organism>
<accession>O74841</accession>